<evidence type="ECO:0000250" key="1"/>
<evidence type="ECO:0000250" key="2">
    <source>
        <dbReference type="UniProtKB" id="P68137"/>
    </source>
</evidence>
<evidence type="ECO:0000305" key="3"/>
<protein>
    <recommendedName>
        <fullName>Actin-10</fullName>
        <ecNumber evidence="2">3.6.4.-</ecNumber>
    </recommendedName>
</protein>
<organism>
    <name type="scientific">Dictyostelium discoideum</name>
    <name type="common">Social amoeba</name>
    <dbReference type="NCBI Taxonomy" id="44689"/>
    <lineage>
        <taxon>Eukaryota</taxon>
        <taxon>Amoebozoa</taxon>
        <taxon>Evosea</taxon>
        <taxon>Eumycetozoa</taxon>
        <taxon>Dictyostelia</taxon>
        <taxon>Dictyosteliales</taxon>
        <taxon>Dictyosteliaceae</taxon>
        <taxon>Dictyostelium</taxon>
    </lineage>
</organism>
<feature type="chain" id="PRO_0000312670" description="Actin-10">
    <location>
        <begin position="1"/>
        <end position="376"/>
    </location>
</feature>
<sequence length="376" mass="41747">MEGEDVQALVIDNGSGMCKAGFAGDDAPRAVFPSIVGRPRHTGVMVGMGQKDSYVGDEAQSKRGILTLKYPIEHGIVTNWDDMEKIWHHTFYNELRVAPEEHPVLLTEAPLNPKANREKMTQIMFETFNTPAMYVAIQAVLSLYASGRTTGIVMDSGDGVSHTVPIYEGYALPHAILRLDLAGRDLTDYMMKILTERGYSFTTTAEREIVRDIKEKLAYVALDFEAEMQTAASSSALEKSYELPDGQVITIGNERFRCPEALFQPSFLGMESAGIHETTYNSIMKCDVDIRKDLYGNVVLSGGTTMFPGIADRMNKELTALAPSTMKIKIIAPPERKYSVWIGGSILASLSTFQQMWISKEEYDESGPSIVHRKCF</sequence>
<keyword id="KW-0067">ATP-binding</keyword>
<keyword id="KW-0963">Cytoplasm</keyword>
<keyword id="KW-0206">Cytoskeleton</keyword>
<keyword id="KW-0903">Direct protein sequencing</keyword>
<keyword id="KW-0378">Hydrolase</keyword>
<keyword id="KW-0547">Nucleotide-binding</keyword>
<keyword id="KW-1185">Reference proteome</keyword>
<dbReference type="EC" id="3.6.4.-" evidence="2"/>
<dbReference type="EMBL" id="AAFI02000149">
    <property type="protein sequence ID" value="EAL62506.1"/>
    <property type="molecule type" value="Genomic_DNA"/>
</dbReference>
<dbReference type="RefSeq" id="XP_636030.1">
    <property type="nucleotide sequence ID" value="XM_630938.1"/>
</dbReference>
<dbReference type="SMR" id="Q54GX7"/>
<dbReference type="FunCoup" id="Q54GX7">
    <property type="interactions" value="351"/>
</dbReference>
<dbReference type="STRING" id="44689.Q54GX7"/>
<dbReference type="PaxDb" id="44689-DDB0220457"/>
<dbReference type="EnsemblProtists" id="EAL62506">
    <property type="protein sequence ID" value="EAL62506"/>
    <property type="gene ID" value="DDB_G0289811"/>
</dbReference>
<dbReference type="GeneID" id="8627357"/>
<dbReference type="KEGG" id="ddi:DDB_G0289811"/>
<dbReference type="dictyBase" id="DDB_G0289811">
    <property type="gene designation" value="act10"/>
</dbReference>
<dbReference type="VEuPathDB" id="AmoebaDB:DDB_G0289811"/>
<dbReference type="eggNOG" id="KOG0676">
    <property type="taxonomic scope" value="Eukaryota"/>
</dbReference>
<dbReference type="HOGENOM" id="CLU_027965_0_2_1"/>
<dbReference type="InParanoid" id="Q54GX7"/>
<dbReference type="OMA" id="FHTTAER"/>
<dbReference type="PhylomeDB" id="Q54GX7"/>
<dbReference type="PRO" id="PR:Q54GX7"/>
<dbReference type="Proteomes" id="UP000002195">
    <property type="component" value="Chromosome 5"/>
</dbReference>
<dbReference type="GO" id="GO:0015629">
    <property type="term" value="C:actin cytoskeleton"/>
    <property type="evidence" value="ECO:0000314"/>
    <property type="project" value="dictyBase"/>
</dbReference>
<dbReference type="GO" id="GO:0005884">
    <property type="term" value="C:actin filament"/>
    <property type="evidence" value="ECO:0000314"/>
    <property type="project" value="dictyBase"/>
</dbReference>
<dbReference type="GO" id="GO:0005938">
    <property type="term" value="C:cell cortex"/>
    <property type="evidence" value="ECO:0000314"/>
    <property type="project" value="dictyBase"/>
</dbReference>
<dbReference type="GO" id="GO:0031252">
    <property type="term" value="C:cell leading edge"/>
    <property type="evidence" value="ECO:0000314"/>
    <property type="project" value="dictyBase"/>
</dbReference>
<dbReference type="GO" id="GO:0060187">
    <property type="term" value="C:cell pole"/>
    <property type="evidence" value="ECO:0000314"/>
    <property type="project" value="dictyBase"/>
</dbReference>
<dbReference type="GO" id="GO:0005911">
    <property type="term" value="C:cell-cell junction"/>
    <property type="evidence" value="ECO:0000314"/>
    <property type="project" value="dictyBase"/>
</dbReference>
<dbReference type="GO" id="GO:0030864">
    <property type="term" value="C:cortical actin cytoskeleton"/>
    <property type="evidence" value="ECO:0000314"/>
    <property type="project" value="dictyBase"/>
</dbReference>
<dbReference type="GO" id="GO:0032009">
    <property type="term" value="C:early phagosome"/>
    <property type="evidence" value="ECO:0000314"/>
    <property type="project" value="dictyBase"/>
</dbReference>
<dbReference type="GO" id="GO:0061836">
    <property type="term" value="C:intranuclear rod"/>
    <property type="evidence" value="ECO:0000314"/>
    <property type="project" value="dictyBase"/>
</dbReference>
<dbReference type="GO" id="GO:0030027">
    <property type="term" value="C:lamellipodium"/>
    <property type="evidence" value="ECO:0000314"/>
    <property type="project" value="dictyBase"/>
</dbReference>
<dbReference type="GO" id="GO:0001891">
    <property type="term" value="C:phagocytic cup"/>
    <property type="evidence" value="ECO:0000314"/>
    <property type="project" value="dictyBase"/>
</dbReference>
<dbReference type="GO" id="GO:0045335">
    <property type="term" value="C:phagocytic vesicle"/>
    <property type="evidence" value="ECO:0000314"/>
    <property type="project" value="dictyBase"/>
</dbReference>
<dbReference type="GO" id="GO:0032010">
    <property type="term" value="C:phagolysosome"/>
    <property type="evidence" value="ECO:0000314"/>
    <property type="project" value="dictyBase"/>
</dbReference>
<dbReference type="GO" id="GO:0031143">
    <property type="term" value="C:pseudopodium"/>
    <property type="evidence" value="ECO:0000304"/>
    <property type="project" value="dictyBase"/>
</dbReference>
<dbReference type="GO" id="GO:0005524">
    <property type="term" value="F:ATP binding"/>
    <property type="evidence" value="ECO:0007669"/>
    <property type="project" value="UniProtKB-KW"/>
</dbReference>
<dbReference type="GO" id="GO:0016787">
    <property type="term" value="F:hydrolase activity"/>
    <property type="evidence" value="ECO:0007669"/>
    <property type="project" value="UniProtKB-KW"/>
</dbReference>
<dbReference type="GO" id="GO:0017022">
    <property type="term" value="F:myosin binding"/>
    <property type="evidence" value="ECO:0000314"/>
    <property type="project" value="dictyBase"/>
</dbReference>
<dbReference type="GO" id="GO:0005200">
    <property type="term" value="F:structural constituent of cytoskeleton"/>
    <property type="evidence" value="ECO:0000314"/>
    <property type="project" value="dictyBase"/>
</dbReference>
<dbReference type="GO" id="GO:0000902">
    <property type="term" value="P:cell morphogenesis"/>
    <property type="evidence" value="ECO:0000304"/>
    <property type="project" value="dictyBase"/>
</dbReference>
<dbReference type="GO" id="GO:0006935">
    <property type="term" value="P:chemotaxis"/>
    <property type="evidence" value="ECO:0000304"/>
    <property type="project" value="dictyBase"/>
</dbReference>
<dbReference type="GO" id="GO:0006897">
    <property type="term" value="P:endocytosis"/>
    <property type="evidence" value="ECO:0000304"/>
    <property type="project" value="dictyBase"/>
</dbReference>
<dbReference type="GO" id="GO:0000281">
    <property type="term" value="P:mitotic cytokinesis"/>
    <property type="evidence" value="ECO:0000304"/>
    <property type="project" value="dictyBase"/>
</dbReference>
<dbReference type="GO" id="GO:0006909">
    <property type="term" value="P:phagocytosis"/>
    <property type="evidence" value="ECO:0000270"/>
    <property type="project" value="dictyBase"/>
</dbReference>
<dbReference type="GO" id="GO:0042331">
    <property type="term" value="P:phototaxis"/>
    <property type="evidence" value="ECO:0000304"/>
    <property type="project" value="dictyBase"/>
</dbReference>
<dbReference type="GO" id="GO:0001778">
    <property type="term" value="P:plasma membrane repair"/>
    <property type="evidence" value="ECO:0000314"/>
    <property type="project" value="dictyBase"/>
</dbReference>
<dbReference type="GO" id="GO:0051591">
    <property type="term" value="P:response to cAMP"/>
    <property type="evidence" value="ECO:0000314"/>
    <property type="project" value="dictyBase"/>
</dbReference>
<dbReference type="GO" id="GO:0016192">
    <property type="term" value="P:vesicle-mediated transport"/>
    <property type="evidence" value="ECO:0000304"/>
    <property type="project" value="dictyBase"/>
</dbReference>
<dbReference type="CDD" id="cd10224">
    <property type="entry name" value="ASKHA_NBD_actin"/>
    <property type="match status" value="1"/>
</dbReference>
<dbReference type="FunFam" id="2.30.36.70:FF:000001">
    <property type="entry name" value="Actin, alpha skeletal muscle"/>
    <property type="match status" value="1"/>
</dbReference>
<dbReference type="FunFam" id="3.30.420.40:FF:000131">
    <property type="entry name" value="Actin, alpha skeletal muscle"/>
    <property type="match status" value="1"/>
</dbReference>
<dbReference type="FunFam" id="3.30.420.40:FF:000291">
    <property type="entry name" value="Actin, alpha skeletal muscle"/>
    <property type="match status" value="1"/>
</dbReference>
<dbReference type="FunFam" id="3.90.640.10:FF:000047">
    <property type="entry name" value="Actin, alpha skeletal muscle"/>
    <property type="match status" value="1"/>
</dbReference>
<dbReference type="FunFam" id="3.30.420.40:FF:000058">
    <property type="entry name" value="Putative actin-related protein 5"/>
    <property type="match status" value="1"/>
</dbReference>
<dbReference type="Gene3D" id="3.30.420.40">
    <property type="match status" value="2"/>
</dbReference>
<dbReference type="Gene3D" id="3.90.640.10">
    <property type="entry name" value="Actin, Chain A, domain 4"/>
    <property type="match status" value="1"/>
</dbReference>
<dbReference type="InterPro" id="IPR004000">
    <property type="entry name" value="Actin"/>
</dbReference>
<dbReference type="InterPro" id="IPR020902">
    <property type="entry name" value="Actin/actin-like_CS"/>
</dbReference>
<dbReference type="InterPro" id="IPR004001">
    <property type="entry name" value="Actin_CS"/>
</dbReference>
<dbReference type="InterPro" id="IPR043129">
    <property type="entry name" value="ATPase_NBD"/>
</dbReference>
<dbReference type="PANTHER" id="PTHR11937">
    <property type="entry name" value="ACTIN"/>
    <property type="match status" value="1"/>
</dbReference>
<dbReference type="Pfam" id="PF00022">
    <property type="entry name" value="Actin"/>
    <property type="match status" value="1"/>
</dbReference>
<dbReference type="PRINTS" id="PR00190">
    <property type="entry name" value="ACTIN"/>
</dbReference>
<dbReference type="SMART" id="SM00268">
    <property type="entry name" value="ACTIN"/>
    <property type="match status" value="1"/>
</dbReference>
<dbReference type="SUPFAM" id="SSF53067">
    <property type="entry name" value="Actin-like ATPase domain"/>
    <property type="match status" value="2"/>
</dbReference>
<dbReference type="PROSITE" id="PS00406">
    <property type="entry name" value="ACTINS_1"/>
    <property type="match status" value="1"/>
</dbReference>
<dbReference type="PROSITE" id="PS00432">
    <property type="entry name" value="ACTINS_2"/>
    <property type="match status" value="1"/>
</dbReference>
<dbReference type="PROSITE" id="PS01132">
    <property type="entry name" value="ACTINS_ACT_LIKE"/>
    <property type="match status" value="1"/>
</dbReference>
<accession>Q54GX7</accession>
<reference key="1">
    <citation type="journal article" date="2005" name="Nature">
        <title>The genome of the social amoeba Dictyostelium discoideum.</title>
        <authorList>
            <person name="Eichinger L."/>
            <person name="Pachebat J.A."/>
            <person name="Gloeckner G."/>
            <person name="Rajandream M.A."/>
            <person name="Sucgang R."/>
            <person name="Berriman M."/>
            <person name="Song J."/>
            <person name="Olsen R."/>
            <person name="Szafranski K."/>
            <person name="Xu Q."/>
            <person name="Tunggal B."/>
            <person name="Kummerfeld S."/>
            <person name="Madera M."/>
            <person name="Konfortov B.A."/>
            <person name="Rivero F."/>
            <person name="Bankier A.T."/>
            <person name="Lehmann R."/>
            <person name="Hamlin N."/>
            <person name="Davies R."/>
            <person name="Gaudet P."/>
            <person name="Fey P."/>
            <person name="Pilcher K."/>
            <person name="Chen G."/>
            <person name="Saunders D."/>
            <person name="Sodergren E.J."/>
            <person name="Davis P."/>
            <person name="Kerhornou A."/>
            <person name="Nie X."/>
            <person name="Hall N."/>
            <person name="Anjard C."/>
            <person name="Hemphill L."/>
            <person name="Bason N."/>
            <person name="Farbrother P."/>
            <person name="Desany B."/>
            <person name="Just E."/>
            <person name="Morio T."/>
            <person name="Rost R."/>
            <person name="Churcher C.M."/>
            <person name="Cooper J."/>
            <person name="Haydock S."/>
            <person name="van Driessche N."/>
            <person name="Cronin A."/>
            <person name="Goodhead I."/>
            <person name="Muzny D.M."/>
            <person name="Mourier T."/>
            <person name="Pain A."/>
            <person name="Lu M."/>
            <person name="Harper D."/>
            <person name="Lindsay R."/>
            <person name="Hauser H."/>
            <person name="James K.D."/>
            <person name="Quiles M."/>
            <person name="Madan Babu M."/>
            <person name="Saito T."/>
            <person name="Buchrieser C."/>
            <person name="Wardroper A."/>
            <person name="Felder M."/>
            <person name="Thangavelu M."/>
            <person name="Johnson D."/>
            <person name="Knights A."/>
            <person name="Loulseged H."/>
            <person name="Mungall K.L."/>
            <person name="Oliver K."/>
            <person name="Price C."/>
            <person name="Quail M.A."/>
            <person name="Urushihara H."/>
            <person name="Hernandez J."/>
            <person name="Rabbinowitsch E."/>
            <person name="Steffen D."/>
            <person name="Sanders M."/>
            <person name="Ma J."/>
            <person name="Kohara Y."/>
            <person name="Sharp S."/>
            <person name="Simmonds M.N."/>
            <person name="Spiegler S."/>
            <person name="Tivey A."/>
            <person name="Sugano S."/>
            <person name="White B."/>
            <person name="Walker D."/>
            <person name="Woodward J.R."/>
            <person name="Winckler T."/>
            <person name="Tanaka Y."/>
            <person name="Shaulsky G."/>
            <person name="Schleicher M."/>
            <person name="Weinstock G.M."/>
            <person name="Rosenthal A."/>
            <person name="Cox E.C."/>
            <person name="Chisholm R.L."/>
            <person name="Gibbs R.A."/>
            <person name="Loomis W.F."/>
            <person name="Platzer M."/>
            <person name="Kay R.R."/>
            <person name="Williams J.G."/>
            <person name="Dear P.H."/>
            <person name="Noegel A.A."/>
            <person name="Barrell B.G."/>
            <person name="Kuspa A."/>
        </authorList>
    </citation>
    <scope>NUCLEOTIDE SEQUENCE [LARGE SCALE GENOMIC DNA]</scope>
    <source>
        <strain>AX4</strain>
    </source>
</reference>
<reference key="2">
    <citation type="submission" date="2009-07" db="UniProtKB">
        <authorList>
            <person name="Bienvenut W.V."/>
            <person name="Ura S."/>
            <person name="Insall R.H."/>
        </authorList>
    </citation>
    <scope>PROTEIN SEQUENCE OF 30-63; 97-114; 149-178; 198-211; 240-255 AND 292-337</scope>
    <scope>IDENTIFICATION BY MASS SPECTROMETRY</scope>
    <source>
        <strain>AX2</strain>
    </source>
</reference>
<comment type="function">
    <text evidence="1">Actins are highly conserved proteins that are involved in various types of cell motility and are ubiquitously expressed in all eukaryotic cells. Multiple isoforms are involved in various cellular functions such as cytoskeleton structure, cell mobility, chromosome movement and muscle contraction (By similarity).</text>
</comment>
<comment type="catalytic activity">
    <reaction evidence="2">
        <text>ATP + H2O = ADP + phosphate + H(+)</text>
        <dbReference type="Rhea" id="RHEA:13065"/>
        <dbReference type="ChEBI" id="CHEBI:15377"/>
        <dbReference type="ChEBI" id="CHEBI:15378"/>
        <dbReference type="ChEBI" id="CHEBI:30616"/>
        <dbReference type="ChEBI" id="CHEBI:43474"/>
        <dbReference type="ChEBI" id="CHEBI:456216"/>
    </reaction>
</comment>
<comment type="subcellular location">
    <subcellularLocation>
        <location evidence="1">Cytoplasm</location>
        <location evidence="1">Cytoskeleton</location>
    </subcellularLocation>
</comment>
<comment type="similarity">
    <text evidence="3">Belongs to the actin family.</text>
</comment>
<name>ACT10_DICDI</name>
<proteinExistence type="evidence at protein level"/>
<gene>
    <name type="primary">act10</name>
    <name type="ORF">DDB_G0289811</name>
</gene>